<accession>A2AVJ5</accession>
<accession>B7ZWM2</accession>
<accession>Q80Y78</accession>
<accession>Q8BIT0</accession>
<sequence>MTRGLAPLLPIEFHKMGSFRRPRPRFMSSPVLSELPRFQAARQALQLSSNSAWNSVQTAVINVFKGGGLQSNELYALNESIRRLLKSELGSFITDYFQNQLLAKGLSFVEEKIKLCEGDNRIEVLAEVWDHFFTETLPTLQAIFYPVQGQELTIRQISLLGFRDLVLLKVKLGDVLLLAQSKLPSSVIQMLLILQSVHEPTGPSEGYLQLEELVKQVVSPFLSISGDRSCSGPTYSLARRHSRVRPKVTVLNYASLMTTVGRPLNEMVLTPLTEQEGEAYLEKCGSVRRHTVANAHSDIQLLAMATMMHSGLGEEAGGEDKHLLLPPSFPPPHRQCSSEPSILDSPDELELEDVASGSQEDSELNCASLS</sequence>
<reference key="1">
    <citation type="journal article" date="2005" name="Science">
        <title>The transcriptional landscape of the mammalian genome.</title>
        <authorList>
            <person name="Carninci P."/>
            <person name="Kasukawa T."/>
            <person name="Katayama S."/>
            <person name="Gough J."/>
            <person name="Frith M.C."/>
            <person name="Maeda N."/>
            <person name="Oyama R."/>
            <person name="Ravasi T."/>
            <person name="Lenhard B."/>
            <person name="Wells C."/>
            <person name="Kodzius R."/>
            <person name="Shimokawa K."/>
            <person name="Bajic V.B."/>
            <person name="Brenner S.E."/>
            <person name="Batalov S."/>
            <person name="Forrest A.R."/>
            <person name="Zavolan M."/>
            <person name="Davis M.J."/>
            <person name="Wilming L.G."/>
            <person name="Aidinis V."/>
            <person name="Allen J.E."/>
            <person name="Ambesi-Impiombato A."/>
            <person name="Apweiler R."/>
            <person name="Aturaliya R.N."/>
            <person name="Bailey T.L."/>
            <person name="Bansal M."/>
            <person name="Baxter L."/>
            <person name="Beisel K.W."/>
            <person name="Bersano T."/>
            <person name="Bono H."/>
            <person name="Chalk A.M."/>
            <person name="Chiu K.P."/>
            <person name="Choudhary V."/>
            <person name="Christoffels A."/>
            <person name="Clutterbuck D.R."/>
            <person name="Crowe M.L."/>
            <person name="Dalla E."/>
            <person name="Dalrymple B.P."/>
            <person name="de Bono B."/>
            <person name="Della Gatta G."/>
            <person name="di Bernardo D."/>
            <person name="Down T."/>
            <person name="Engstrom P."/>
            <person name="Fagiolini M."/>
            <person name="Faulkner G."/>
            <person name="Fletcher C.F."/>
            <person name="Fukushima T."/>
            <person name="Furuno M."/>
            <person name="Futaki S."/>
            <person name="Gariboldi M."/>
            <person name="Georgii-Hemming P."/>
            <person name="Gingeras T.R."/>
            <person name="Gojobori T."/>
            <person name="Green R.E."/>
            <person name="Gustincich S."/>
            <person name="Harbers M."/>
            <person name="Hayashi Y."/>
            <person name="Hensch T.K."/>
            <person name="Hirokawa N."/>
            <person name="Hill D."/>
            <person name="Huminiecki L."/>
            <person name="Iacono M."/>
            <person name="Ikeo K."/>
            <person name="Iwama A."/>
            <person name="Ishikawa T."/>
            <person name="Jakt M."/>
            <person name="Kanapin A."/>
            <person name="Katoh M."/>
            <person name="Kawasawa Y."/>
            <person name="Kelso J."/>
            <person name="Kitamura H."/>
            <person name="Kitano H."/>
            <person name="Kollias G."/>
            <person name="Krishnan S.P."/>
            <person name="Kruger A."/>
            <person name="Kummerfeld S.K."/>
            <person name="Kurochkin I.V."/>
            <person name="Lareau L.F."/>
            <person name="Lazarevic D."/>
            <person name="Lipovich L."/>
            <person name="Liu J."/>
            <person name="Liuni S."/>
            <person name="McWilliam S."/>
            <person name="Madan Babu M."/>
            <person name="Madera M."/>
            <person name="Marchionni L."/>
            <person name="Matsuda H."/>
            <person name="Matsuzawa S."/>
            <person name="Miki H."/>
            <person name="Mignone F."/>
            <person name="Miyake S."/>
            <person name="Morris K."/>
            <person name="Mottagui-Tabar S."/>
            <person name="Mulder N."/>
            <person name="Nakano N."/>
            <person name="Nakauchi H."/>
            <person name="Ng P."/>
            <person name="Nilsson R."/>
            <person name="Nishiguchi S."/>
            <person name="Nishikawa S."/>
            <person name="Nori F."/>
            <person name="Ohara O."/>
            <person name="Okazaki Y."/>
            <person name="Orlando V."/>
            <person name="Pang K.C."/>
            <person name="Pavan W.J."/>
            <person name="Pavesi G."/>
            <person name="Pesole G."/>
            <person name="Petrovsky N."/>
            <person name="Piazza S."/>
            <person name="Reed J."/>
            <person name="Reid J.F."/>
            <person name="Ring B.Z."/>
            <person name="Ringwald M."/>
            <person name="Rost B."/>
            <person name="Ruan Y."/>
            <person name="Salzberg S.L."/>
            <person name="Sandelin A."/>
            <person name="Schneider C."/>
            <person name="Schoenbach C."/>
            <person name="Sekiguchi K."/>
            <person name="Semple C.A."/>
            <person name="Seno S."/>
            <person name="Sessa L."/>
            <person name="Sheng Y."/>
            <person name="Shibata Y."/>
            <person name="Shimada H."/>
            <person name="Shimada K."/>
            <person name="Silva D."/>
            <person name="Sinclair B."/>
            <person name="Sperling S."/>
            <person name="Stupka E."/>
            <person name="Sugiura K."/>
            <person name="Sultana R."/>
            <person name="Takenaka Y."/>
            <person name="Taki K."/>
            <person name="Tammoja K."/>
            <person name="Tan S.L."/>
            <person name="Tang S."/>
            <person name="Taylor M.S."/>
            <person name="Tegner J."/>
            <person name="Teichmann S.A."/>
            <person name="Ueda H.R."/>
            <person name="van Nimwegen E."/>
            <person name="Verardo R."/>
            <person name="Wei C.L."/>
            <person name="Yagi K."/>
            <person name="Yamanishi H."/>
            <person name="Zabarovsky E."/>
            <person name="Zhu S."/>
            <person name="Zimmer A."/>
            <person name="Hide W."/>
            <person name="Bult C."/>
            <person name="Grimmond S.M."/>
            <person name="Teasdale R.D."/>
            <person name="Liu E.T."/>
            <person name="Brusic V."/>
            <person name="Quackenbush J."/>
            <person name="Wahlestedt C."/>
            <person name="Mattick J.S."/>
            <person name="Hume D.A."/>
            <person name="Kai C."/>
            <person name="Sasaki D."/>
            <person name="Tomaru Y."/>
            <person name="Fukuda S."/>
            <person name="Kanamori-Katayama M."/>
            <person name="Suzuki M."/>
            <person name="Aoki J."/>
            <person name="Arakawa T."/>
            <person name="Iida J."/>
            <person name="Imamura K."/>
            <person name="Itoh M."/>
            <person name="Kato T."/>
            <person name="Kawaji H."/>
            <person name="Kawagashira N."/>
            <person name="Kawashima T."/>
            <person name="Kojima M."/>
            <person name="Kondo S."/>
            <person name="Konno H."/>
            <person name="Nakano K."/>
            <person name="Ninomiya N."/>
            <person name="Nishio T."/>
            <person name="Okada M."/>
            <person name="Plessy C."/>
            <person name="Shibata K."/>
            <person name="Shiraki T."/>
            <person name="Suzuki S."/>
            <person name="Tagami M."/>
            <person name="Waki K."/>
            <person name="Watahiki A."/>
            <person name="Okamura-Oho Y."/>
            <person name="Suzuki H."/>
            <person name="Kawai J."/>
            <person name="Hayashizaki Y."/>
        </authorList>
    </citation>
    <scope>NUCLEOTIDE SEQUENCE [LARGE SCALE MRNA]</scope>
    <source>
        <strain>C57BL/6J</strain>
        <tissue>Placenta</tissue>
    </source>
</reference>
<reference key="2">
    <citation type="journal article" date="2009" name="PLoS Biol.">
        <title>Lineage-specific biology revealed by a finished genome assembly of the mouse.</title>
        <authorList>
            <person name="Church D.M."/>
            <person name="Goodstadt L."/>
            <person name="Hillier L.W."/>
            <person name="Zody M.C."/>
            <person name="Goldstein S."/>
            <person name="She X."/>
            <person name="Bult C.J."/>
            <person name="Agarwala R."/>
            <person name="Cherry J.L."/>
            <person name="DiCuccio M."/>
            <person name="Hlavina W."/>
            <person name="Kapustin Y."/>
            <person name="Meric P."/>
            <person name="Maglott D."/>
            <person name="Birtle Z."/>
            <person name="Marques A.C."/>
            <person name="Graves T."/>
            <person name="Zhou S."/>
            <person name="Teague B."/>
            <person name="Potamousis K."/>
            <person name="Churas C."/>
            <person name="Place M."/>
            <person name="Herschleb J."/>
            <person name="Runnheim R."/>
            <person name="Forrest D."/>
            <person name="Amos-Landgraf J."/>
            <person name="Schwartz D.C."/>
            <person name="Cheng Z."/>
            <person name="Lindblad-Toh K."/>
            <person name="Eichler E.E."/>
            <person name="Ponting C.P."/>
        </authorList>
    </citation>
    <scope>NUCLEOTIDE SEQUENCE [LARGE SCALE GENOMIC DNA]</scope>
    <source>
        <strain>C57BL/6J</strain>
    </source>
</reference>
<reference key="3">
    <citation type="journal article" date="2004" name="Genome Res.">
        <title>The status, quality, and expansion of the NIH full-length cDNA project: the Mammalian Gene Collection (MGC).</title>
        <authorList>
            <consortium name="The MGC Project Team"/>
        </authorList>
    </citation>
    <scope>NUCLEOTIDE SEQUENCE [LARGE SCALE MRNA]</scope>
    <source>
        <tissue>Brain</tissue>
        <tissue>Olfactory epithelium</tissue>
    </source>
</reference>
<reference key="4">
    <citation type="journal article" date="2010" name="Cell">
        <title>A tissue-specific atlas of mouse protein phosphorylation and expression.</title>
        <authorList>
            <person name="Huttlin E.L."/>
            <person name="Jedrychowski M.P."/>
            <person name="Elias J.E."/>
            <person name="Goswami T."/>
            <person name="Rad R."/>
            <person name="Beausoleil S.A."/>
            <person name="Villen J."/>
            <person name="Haas W."/>
            <person name="Sowa M.E."/>
            <person name="Gygi S.P."/>
        </authorList>
    </citation>
    <scope>PHOSPHORYLATION [LARGE SCALE ANALYSIS] AT SER-28</scope>
    <scope>IDENTIFICATION BY MASS SPECTROMETRY [LARGE SCALE ANALYSIS]</scope>
    <source>
        <tissue>Brain</tissue>
        <tissue>Kidney</tissue>
        <tissue>Lung</tissue>
    </source>
</reference>
<reference key="5">
    <citation type="journal article" date="2012" name="Nat. Cell Biol.">
        <title>PRR5L degradation promotes mTORC2-mediated PKC-delta phosphorylation and cell migration downstream of Galpha12.</title>
        <authorList>
            <person name="Gan X."/>
            <person name="Wang J."/>
            <person name="Wang C."/>
            <person name="Sommer E."/>
            <person name="Kozasa T."/>
            <person name="Srinivasula S."/>
            <person name="Alessi D."/>
            <person name="Offermanns S."/>
            <person name="Simon M.I."/>
            <person name="Wu D."/>
        </authorList>
    </citation>
    <scope>FUNCTION IN MTORC2 SIGNALING</scope>
</reference>
<feature type="chain" id="PRO_0000332710" description="Proline-rich protein 5-like">
    <location>
        <begin position="1"/>
        <end position="370"/>
    </location>
</feature>
<feature type="region of interest" description="Disordered" evidence="3">
    <location>
        <begin position="312"/>
        <end position="346"/>
    </location>
</feature>
<feature type="region of interest" description="Disordered" evidence="3">
    <location>
        <begin position="351"/>
        <end position="370"/>
    </location>
</feature>
<feature type="modified residue" description="Phosphoserine" evidence="6">
    <location>
        <position position="28"/>
    </location>
</feature>
<feature type="sequence conflict" description="In Ref. 1; BAC25324." evidence="5" ref="1">
    <original>A</original>
    <variation>D</variation>
    <location>
        <position position="293"/>
    </location>
</feature>
<feature type="sequence conflict" description="In Ref. 1; BAC25324." evidence="5" ref="1">
    <original>G</original>
    <variation>A</variation>
    <location>
        <position position="317"/>
    </location>
</feature>
<name>PRR5L_MOUSE</name>
<evidence type="ECO:0000250" key="1"/>
<evidence type="ECO:0000250" key="2">
    <source>
        <dbReference type="UniProtKB" id="Q6MZQ0"/>
    </source>
</evidence>
<evidence type="ECO:0000256" key="3">
    <source>
        <dbReference type="SAM" id="MobiDB-lite"/>
    </source>
</evidence>
<evidence type="ECO:0000269" key="4">
    <source>
    </source>
</evidence>
<evidence type="ECO:0000305" key="5"/>
<evidence type="ECO:0007744" key="6">
    <source>
    </source>
</evidence>
<organism>
    <name type="scientific">Mus musculus</name>
    <name type="common">Mouse</name>
    <dbReference type="NCBI Taxonomy" id="10090"/>
    <lineage>
        <taxon>Eukaryota</taxon>
        <taxon>Metazoa</taxon>
        <taxon>Chordata</taxon>
        <taxon>Craniata</taxon>
        <taxon>Vertebrata</taxon>
        <taxon>Euteleostomi</taxon>
        <taxon>Mammalia</taxon>
        <taxon>Eutheria</taxon>
        <taxon>Euarchontoglires</taxon>
        <taxon>Glires</taxon>
        <taxon>Rodentia</taxon>
        <taxon>Myomorpha</taxon>
        <taxon>Muroidea</taxon>
        <taxon>Muridae</taxon>
        <taxon>Murinae</taxon>
        <taxon>Mus</taxon>
        <taxon>Mus</taxon>
    </lineage>
</organism>
<gene>
    <name type="primary">Prr5l</name>
    <name type="synonym">Protor2</name>
</gene>
<comment type="function">
    <text evidence="2 4">Associates with the mTORC2 complex that regulates cellular processes including survival and organization of the cytoskeleton (By similarity). Regulates the activity of the mTORC2 complex in a substrate-specific manner preventing for instance the specific phosphorylation of PKCs and thereby controlling cell migration (PubMed:22609986). Plays a role in the stimulation of ZFP36-mediated mRNA decay of several ZFP36-associated mRNAs, such as TNF-alpha and GM-CSF, in response to stress. Required for ZFP36 localization to cytoplasmic stress granule (SG) and P-body (PB) in response to stress.</text>
</comment>
<comment type="subunit">
    <text evidence="2">Interacts with the mammalian target of rapamycin complex 2 (mTORC2) which contains MTOR, MLST8, PRR5, RICTOR, MAPKAP1 and DEPTOR. Interacts with RFFL. Interacts (via C-terminus) with ZFP36 (via C-terminus); this interaction may accelerate ZFP36-mediated mRNA decay during stress. Interacts with RICTOR.</text>
</comment>
<comment type="PTM">
    <text evidence="1">Ubiquitinated. Ubiquitination by RFFL promotes proteasomal degradation of PRR5L thereby modifying the substrate-specific activity of the mTORC2 complex. Ubiquitination by RFFL is stimulated by LPA/lysophosphatidic acid (By similarity).</text>
</comment>
<comment type="similarity">
    <text evidence="5">Belongs to the PROTOR family.</text>
</comment>
<comment type="sequence caution" evidence="5">
    <conflict type="erroneous initiation">
        <sequence resource="EMBL-CDS" id="AAH48394"/>
    </conflict>
    <text>Truncated N-terminus.</text>
</comment>
<comment type="sequence caution" evidence="5">
    <conflict type="erroneous initiation">
        <sequence resource="EMBL-CDS" id="BAC25324"/>
    </conflict>
    <text>Truncated N-terminus.</text>
</comment>
<comment type="sequence caution" evidence="5">
    <conflict type="erroneous initiation">
        <sequence resource="EMBL-CDS" id="BAE26803"/>
    </conflict>
    <text>Truncated N-terminus.</text>
</comment>
<protein>
    <recommendedName>
        <fullName>Proline-rich protein 5-like</fullName>
    </recommendedName>
    <alternativeName>
        <fullName>Protein observed with Rictor-2</fullName>
        <shortName>Protor-2</shortName>
    </alternativeName>
</protein>
<keyword id="KW-0597">Phosphoprotein</keyword>
<keyword id="KW-1185">Reference proteome</keyword>
<keyword id="KW-0734">Signal transduction inhibitor</keyword>
<keyword id="KW-0832">Ubl conjugation</keyword>
<dbReference type="EMBL" id="AK011178">
    <property type="protein sequence ID" value="BAC25324.1"/>
    <property type="status" value="ALT_INIT"/>
    <property type="molecule type" value="mRNA"/>
</dbReference>
<dbReference type="EMBL" id="AK145981">
    <property type="protein sequence ID" value="BAE26803.1"/>
    <property type="status" value="ALT_INIT"/>
    <property type="molecule type" value="mRNA"/>
</dbReference>
<dbReference type="EMBL" id="AL929534">
    <property type="status" value="NOT_ANNOTATED_CDS"/>
    <property type="molecule type" value="Genomic_DNA"/>
</dbReference>
<dbReference type="EMBL" id="AL929571">
    <property type="status" value="NOT_ANNOTATED_CDS"/>
    <property type="molecule type" value="Genomic_DNA"/>
</dbReference>
<dbReference type="EMBL" id="BC048394">
    <property type="protein sequence ID" value="AAH48394.1"/>
    <property type="status" value="ALT_INIT"/>
    <property type="molecule type" value="mRNA"/>
</dbReference>
<dbReference type="EMBL" id="BC172132">
    <property type="protein sequence ID" value="AAI72132.1"/>
    <property type="molecule type" value="mRNA"/>
</dbReference>
<dbReference type="CCDS" id="CCDS38186.1"/>
<dbReference type="RefSeq" id="NP_001077279.1">
    <property type="nucleotide sequence ID" value="NM_001083810.2"/>
</dbReference>
<dbReference type="RefSeq" id="NP_001104319.1">
    <property type="nucleotide sequence ID" value="NM_001110849.1"/>
</dbReference>
<dbReference type="RefSeq" id="NP_001342554.1">
    <property type="nucleotide sequence ID" value="NM_001355625.1"/>
</dbReference>
<dbReference type="RefSeq" id="NP_780390.3">
    <property type="nucleotide sequence ID" value="NM_175181.5"/>
</dbReference>
<dbReference type="RefSeq" id="XP_006500301.1">
    <property type="nucleotide sequence ID" value="XM_006500238.3"/>
</dbReference>
<dbReference type="RefSeq" id="XP_006500303.1">
    <property type="nucleotide sequence ID" value="XM_006500240.5"/>
</dbReference>
<dbReference type="RefSeq" id="XP_006500304.1">
    <property type="nucleotide sequence ID" value="XM_006500241.5"/>
</dbReference>
<dbReference type="RefSeq" id="XP_017174768.1">
    <property type="nucleotide sequence ID" value="XM_017319279.1"/>
</dbReference>
<dbReference type="RefSeq" id="XP_036018492.1">
    <property type="nucleotide sequence ID" value="XM_036162599.1"/>
</dbReference>
<dbReference type="RefSeq" id="XP_036018493.1">
    <property type="nucleotide sequence ID" value="XM_036162600.1"/>
</dbReference>
<dbReference type="BioGRID" id="215377">
    <property type="interactions" value="1"/>
</dbReference>
<dbReference type="FunCoup" id="A2AVJ5">
    <property type="interactions" value="206"/>
</dbReference>
<dbReference type="STRING" id="10090.ENSMUSP00000130152"/>
<dbReference type="iPTMnet" id="A2AVJ5"/>
<dbReference type="PhosphoSitePlus" id="A2AVJ5"/>
<dbReference type="PaxDb" id="10090-ENSMUSP00000130152"/>
<dbReference type="ProteomicsDB" id="291567"/>
<dbReference type="Pumba" id="A2AVJ5"/>
<dbReference type="Antibodypedia" id="13120">
    <property type="antibodies" value="77 antibodies from 25 providers"/>
</dbReference>
<dbReference type="DNASU" id="72446"/>
<dbReference type="Ensembl" id="ENSMUST00000043845.14">
    <property type="protein sequence ID" value="ENSMUSP00000042167.8"/>
    <property type="gene ID" value="ENSMUSG00000032841.16"/>
</dbReference>
<dbReference type="Ensembl" id="ENSMUST00000163762.8">
    <property type="protein sequence ID" value="ENSMUSP00000127530.2"/>
    <property type="gene ID" value="ENSMUSG00000032841.16"/>
</dbReference>
<dbReference type="Ensembl" id="ENSMUST00000171088.8">
    <property type="protein sequence ID" value="ENSMUSP00000130152.2"/>
    <property type="gene ID" value="ENSMUSG00000032841.16"/>
</dbReference>
<dbReference type="GeneID" id="72446"/>
<dbReference type="KEGG" id="mmu:72446"/>
<dbReference type="UCSC" id="uc008lho.2">
    <property type="organism name" value="mouse"/>
</dbReference>
<dbReference type="AGR" id="MGI:1919696"/>
<dbReference type="CTD" id="79899"/>
<dbReference type="MGI" id="MGI:1919696">
    <property type="gene designation" value="Prr5l"/>
</dbReference>
<dbReference type="VEuPathDB" id="HostDB:ENSMUSG00000032841"/>
<dbReference type="eggNOG" id="ENOG502QSM7">
    <property type="taxonomic scope" value="Eukaryota"/>
</dbReference>
<dbReference type="GeneTree" id="ENSGT00530000063981"/>
<dbReference type="HOGENOM" id="CLU_046146_1_0_1"/>
<dbReference type="InParanoid" id="A2AVJ5"/>
<dbReference type="OMA" id="PFLGLCE"/>
<dbReference type="OrthoDB" id="2290221at2759"/>
<dbReference type="PhylomeDB" id="A2AVJ5"/>
<dbReference type="TreeFam" id="TF314826"/>
<dbReference type="BioGRID-ORCS" id="72446">
    <property type="hits" value="0 hits in 76 CRISPR screens"/>
</dbReference>
<dbReference type="ChiTaRS" id="Prr5l">
    <property type="organism name" value="mouse"/>
</dbReference>
<dbReference type="PRO" id="PR:A2AVJ5"/>
<dbReference type="Proteomes" id="UP000000589">
    <property type="component" value="Chromosome 2"/>
</dbReference>
<dbReference type="RNAct" id="A2AVJ5">
    <property type="molecule type" value="protein"/>
</dbReference>
<dbReference type="Bgee" id="ENSMUSG00000032841">
    <property type="expression patterns" value="Expressed in humerus cartilage element and 222 other cell types or tissues"/>
</dbReference>
<dbReference type="ExpressionAtlas" id="A2AVJ5">
    <property type="expression patterns" value="baseline and differential"/>
</dbReference>
<dbReference type="GO" id="GO:0005739">
    <property type="term" value="C:mitochondrion"/>
    <property type="evidence" value="ECO:0007005"/>
    <property type="project" value="MGI"/>
</dbReference>
<dbReference type="GO" id="GO:0031932">
    <property type="term" value="C:TORC2 complex"/>
    <property type="evidence" value="ECO:0000250"/>
    <property type="project" value="UniProtKB"/>
</dbReference>
<dbReference type="GO" id="GO:0031625">
    <property type="term" value="F:ubiquitin protein ligase binding"/>
    <property type="evidence" value="ECO:0007669"/>
    <property type="project" value="Ensembl"/>
</dbReference>
<dbReference type="GO" id="GO:0034599">
    <property type="term" value="P:cellular response to oxidative stress"/>
    <property type="evidence" value="ECO:0000250"/>
    <property type="project" value="UniProtKB"/>
</dbReference>
<dbReference type="GO" id="GO:0001933">
    <property type="term" value="P:negative regulation of protein phosphorylation"/>
    <property type="evidence" value="ECO:0000250"/>
    <property type="project" value="UniProtKB"/>
</dbReference>
<dbReference type="GO" id="GO:0009968">
    <property type="term" value="P:negative regulation of signal transduction"/>
    <property type="evidence" value="ECO:0007669"/>
    <property type="project" value="UniProtKB-KW"/>
</dbReference>
<dbReference type="GO" id="GO:0043491">
    <property type="term" value="P:phosphatidylinositol 3-kinase/protein kinase B signal transduction"/>
    <property type="evidence" value="ECO:0000316"/>
    <property type="project" value="MGI"/>
</dbReference>
<dbReference type="GO" id="GO:0090316">
    <property type="term" value="P:positive regulation of intracellular protein transport"/>
    <property type="evidence" value="ECO:0000250"/>
    <property type="project" value="UniProtKB"/>
</dbReference>
<dbReference type="GO" id="GO:0061014">
    <property type="term" value="P:positive regulation of mRNA catabolic process"/>
    <property type="evidence" value="ECO:0000250"/>
    <property type="project" value="UniProtKB"/>
</dbReference>
<dbReference type="GO" id="GO:0051897">
    <property type="term" value="P:positive regulation of phosphatidylinositol 3-kinase/protein kinase B signal transduction"/>
    <property type="evidence" value="ECO:0000316"/>
    <property type="project" value="MGI"/>
</dbReference>
<dbReference type="GO" id="GO:0010762">
    <property type="term" value="P:regulation of fibroblast migration"/>
    <property type="evidence" value="ECO:0000315"/>
    <property type="project" value="UniProtKB"/>
</dbReference>
<dbReference type="GO" id="GO:0038203">
    <property type="term" value="P:TORC2 signaling"/>
    <property type="evidence" value="ECO:0000315"/>
    <property type="project" value="UniProtKB"/>
</dbReference>
<dbReference type="InterPro" id="IPR013745">
    <property type="entry name" value="Bit61/PRR5"/>
</dbReference>
<dbReference type="PANTHER" id="PTHR32428:SF3">
    <property type="entry name" value="PROLINE-RICH PROTEIN 5-LIKE"/>
    <property type="match status" value="1"/>
</dbReference>
<dbReference type="PANTHER" id="PTHR32428">
    <property type="entry name" value="TARGET OF RAPAMYCIN COMPLEX 2 SUBUNIT BIT61-RELATED"/>
    <property type="match status" value="1"/>
</dbReference>
<dbReference type="Pfam" id="PF08539">
    <property type="entry name" value="HbrB"/>
    <property type="match status" value="1"/>
</dbReference>
<proteinExistence type="evidence at protein level"/>